<accession>A4G5Z9</accession>
<feature type="chain" id="PRO_1000068603" description="Malate dehydrogenase">
    <location>
        <begin position="1"/>
        <end position="329"/>
    </location>
</feature>
<feature type="active site" description="Proton acceptor" evidence="1">
    <location>
        <position position="190"/>
    </location>
</feature>
<feature type="binding site" evidence="1">
    <location>
        <begin position="12"/>
        <end position="18"/>
    </location>
    <ligand>
        <name>NAD(+)</name>
        <dbReference type="ChEBI" id="CHEBI:57540"/>
    </ligand>
</feature>
<feature type="binding site" evidence="1">
    <location>
        <position position="95"/>
    </location>
    <ligand>
        <name>substrate</name>
    </ligand>
</feature>
<feature type="binding site" evidence="1">
    <location>
        <position position="101"/>
    </location>
    <ligand>
        <name>substrate</name>
    </ligand>
</feature>
<feature type="binding site" evidence="1">
    <location>
        <position position="108"/>
    </location>
    <ligand>
        <name>NAD(+)</name>
        <dbReference type="ChEBI" id="CHEBI:57540"/>
    </ligand>
</feature>
<feature type="binding site" evidence="1">
    <location>
        <position position="115"/>
    </location>
    <ligand>
        <name>NAD(+)</name>
        <dbReference type="ChEBI" id="CHEBI:57540"/>
    </ligand>
</feature>
<feature type="binding site" evidence="1">
    <location>
        <begin position="132"/>
        <end position="134"/>
    </location>
    <ligand>
        <name>NAD(+)</name>
        <dbReference type="ChEBI" id="CHEBI:57540"/>
    </ligand>
</feature>
<feature type="binding site" evidence="1">
    <location>
        <position position="134"/>
    </location>
    <ligand>
        <name>substrate</name>
    </ligand>
</feature>
<feature type="binding site" evidence="1">
    <location>
        <position position="165"/>
    </location>
    <ligand>
        <name>substrate</name>
    </ligand>
</feature>
<gene>
    <name evidence="1" type="primary">mdh</name>
    <name type="ordered locus">HEAR1780</name>
</gene>
<sequence>MAKAPMRVAVTGAAGQIGYSLLFRIANGDLLGKDQPVILQLLEIDNEKAQNALKGVIMEIDDCAFPLLAGVSAHSDPMTAFKDVDIALLVGARPRGPGMERKDLLEANAQIFTVQGKALDAVASRNVKVLVVGNPANTNAYIAMKSAPNLPAKNFTAMLRLDHNRALSQIAAKTGKPVTAIEKLTVWGNHSPTMYPDYRFATIDGKSVKEAINDEVWNKDVFLPTVGKRGAAIIEARGVSSAASAANAAIDHVRDWVLGTNGKWVTMGIPSDGSYGIPKDTMFGFPVTTENGEYKIVQGLEIDAFSQERINLTLKELSEEREGVKHLLA</sequence>
<organism>
    <name type="scientific">Herminiimonas arsenicoxydans</name>
    <dbReference type="NCBI Taxonomy" id="204773"/>
    <lineage>
        <taxon>Bacteria</taxon>
        <taxon>Pseudomonadati</taxon>
        <taxon>Pseudomonadota</taxon>
        <taxon>Betaproteobacteria</taxon>
        <taxon>Burkholderiales</taxon>
        <taxon>Oxalobacteraceae</taxon>
        <taxon>Herminiimonas</taxon>
    </lineage>
</organism>
<dbReference type="EC" id="1.1.1.37" evidence="1"/>
<dbReference type="EMBL" id="CU207211">
    <property type="protein sequence ID" value="CAL61936.1"/>
    <property type="molecule type" value="Genomic_DNA"/>
</dbReference>
<dbReference type="SMR" id="A4G5Z9"/>
<dbReference type="STRING" id="204773.HEAR1780"/>
<dbReference type="KEGG" id="har:HEAR1780"/>
<dbReference type="eggNOG" id="COG0039">
    <property type="taxonomic scope" value="Bacteria"/>
</dbReference>
<dbReference type="HOGENOM" id="CLU_040727_2_0_4"/>
<dbReference type="OrthoDB" id="9802969at2"/>
<dbReference type="Proteomes" id="UP000006697">
    <property type="component" value="Chromosome"/>
</dbReference>
<dbReference type="GO" id="GO:0030060">
    <property type="term" value="F:L-malate dehydrogenase (NAD+) activity"/>
    <property type="evidence" value="ECO:0007669"/>
    <property type="project" value="UniProtKB-UniRule"/>
</dbReference>
<dbReference type="GO" id="GO:0006108">
    <property type="term" value="P:malate metabolic process"/>
    <property type="evidence" value="ECO:0007669"/>
    <property type="project" value="InterPro"/>
</dbReference>
<dbReference type="GO" id="GO:0006099">
    <property type="term" value="P:tricarboxylic acid cycle"/>
    <property type="evidence" value="ECO:0007669"/>
    <property type="project" value="UniProtKB-UniRule"/>
</dbReference>
<dbReference type="CDD" id="cd01338">
    <property type="entry name" value="MDH_chloroplast-like"/>
    <property type="match status" value="1"/>
</dbReference>
<dbReference type="FunFam" id="3.40.50.720:FF:000010">
    <property type="entry name" value="Malate dehydrogenase"/>
    <property type="match status" value="1"/>
</dbReference>
<dbReference type="FunFam" id="3.90.110.10:FF:000002">
    <property type="entry name" value="Malate dehydrogenase"/>
    <property type="match status" value="1"/>
</dbReference>
<dbReference type="Gene3D" id="3.90.110.10">
    <property type="entry name" value="Lactate dehydrogenase/glycoside hydrolase, family 4, C-terminal"/>
    <property type="match status" value="1"/>
</dbReference>
<dbReference type="Gene3D" id="3.40.50.720">
    <property type="entry name" value="NAD(P)-binding Rossmann-like Domain"/>
    <property type="match status" value="1"/>
</dbReference>
<dbReference type="HAMAP" id="MF_01517">
    <property type="entry name" value="Malate_dehydrog_2"/>
    <property type="match status" value="1"/>
</dbReference>
<dbReference type="InterPro" id="IPR001557">
    <property type="entry name" value="L-lactate/malate_DH"/>
</dbReference>
<dbReference type="InterPro" id="IPR022383">
    <property type="entry name" value="Lactate/malate_DH_C"/>
</dbReference>
<dbReference type="InterPro" id="IPR001236">
    <property type="entry name" value="Lactate/malate_DH_N"/>
</dbReference>
<dbReference type="InterPro" id="IPR015955">
    <property type="entry name" value="Lactate_DH/Glyco_Ohase_4_C"/>
</dbReference>
<dbReference type="InterPro" id="IPR010945">
    <property type="entry name" value="Malate_DH_type2"/>
</dbReference>
<dbReference type="InterPro" id="IPR036291">
    <property type="entry name" value="NAD(P)-bd_dom_sf"/>
</dbReference>
<dbReference type="NCBIfam" id="TIGR01759">
    <property type="entry name" value="MalateDH-SF1"/>
    <property type="match status" value="1"/>
</dbReference>
<dbReference type="NCBIfam" id="NF003916">
    <property type="entry name" value="PRK05442.1"/>
    <property type="match status" value="1"/>
</dbReference>
<dbReference type="PANTHER" id="PTHR23382">
    <property type="entry name" value="MALATE DEHYDROGENASE"/>
    <property type="match status" value="1"/>
</dbReference>
<dbReference type="Pfam" id="PF02866">
    <property type="entry name" value="Ldh_1_C"/>
    <property type="match status" value="1"/>
</dbReference>
<dbReference type="Pfam" id="PF00056">
    <property type="entry name" value="Ldh_1_N"/>
    <property type="match status" value="1"/>
</dbReference>
<dbReference type="PIRSF" id="PIRSF000102">
    <property type="entry name" value="Lac_mal_DH"/>
    <property type="match status" value="1"/>
</dbReference>
<dbReference type="SUPFAM" id="SSF56327">
    <property type="entry name" value="LDH C-terminal domain-like"/>
    <property type="match status" value="1"/>
</dbReference>
<dbReference type="SUPFAM" id="SSF51735">
    <property type="entry name" value="NAD(P)-binding Rossmann-fold domains"/>
    <property type="match status" value="1"/>
</dbReference>
<keyword id="KW-0520">NAD</keyword>
<keyword id="KW-0560">Oxidoreductase</keyword>
<keyword id="KW-1185">Reference proteome</keyword>
<keyword id="KW-0816">Tricarboxylic acid cycle</keyword>
<proteinExistence type="inferred from homology"/>
<comment type="function">
    <text evidence="1">Catalyzes the reversible oxidation of malate to oxaloacetate.</text>
</comment>
<comment type="catalytic activity">
    <reaction evidence="1">
        <text>(S)-malate + NAD(+) = oxaloacetate + NADH + H(+)</text>
        <dbReference type="Rhea" id="RHEA:21432"/>
        <dbReference type="ChEBI" id="CHEBI:15378"/>
        <dbReference type="ChEBI" id="CHEBI:15589"/>
        <dbReference type="ChEBI" id="CHEBI:16452"/>
        <dbReference type="ChEBI" id="CHEBI:57540"/>
        <dbReference type="ChEBI" id="CHEBI:57945"/>
        <dbReference type="EC" id="1.1.1.37"/>
    </reaction>
</comment>
<comment type="similarity">
    <text evidence="1">Belongs to the LDH/MDH superfamily. MDH type 2 family.</text>
</comment>
<evidence type="ECO:0000255" key="1">
    <source>
        <dbReference type="HAMAP-Rule" id="MF_01517"/>
    </source>
</evidence>
<protein>
    <recommendedName>
        <fullName evidence="1">Malate dehydrogenase</fullName>
        <ecNumber evidence="1">1.1.1.37</ecNumber>
    </recommendedName>
</protein>
<name>MDH_HERAR</name>
<reference key="1">
    <citation type="journal article" date="2007" name="PLoS Genet.">
        <title>A tale of two oxidation states: bacterial colonization of arsenic-rich environments.</title>
        <authorList>
            <person name="Muller D."/>
            <person name="Medigue C."/>
            <person name="Koechler S."/>
            <person name="Barbe V."/>
            <person name="Barakat M."/>
            <person name="Talla E."/>
            <person name="Bonnefoy V."/>
            <person name="Krin E."/>
            <person name="Arsene-Ploetze F."/>
            <person name="Carapito C."/>
            <person name="Chandler M."/>
            <person name="Cournoyer B."/>
            <person name="Cruveiller S."/>
            <person name="Dossat C."/>
            <person name="Duval S."/>
            <person name="Heymann M."/>
            <person name="Leize E."/>
            <person name="Lieutaud A."/>
            <person name="Lievremont D."/>
            <person name="Makita Y."/>
            <person name="Mangenot S."/>
            <person name="Nitschke W."/>
            <person name="Ortet P."/>
            <person name="Perdrial N."/>
            <person name="Schoepp B."/>
            <person name="Siguier P."/>
            <person name="Simeonova D.D."/>
            <person name="Rouy Z."/>
            <person name="Segurens B."/>
            <person name="Turlin E."/>
            <person name="Vallenet D."/>
            <person name="van Dorsselaer A."/>
            <person name="Weiss S."/>
            <person name="Weissenbach J."/>
            <person name="Lett M.-C."/>
            <person name="Danchin A."/>
            <person name="Bertin P.N."/>
        </authorList>
    </citation>
    <scope>NUCLEOTIDE SEQUENCE [LARGE SCALE GENOMIC DNA]</scope>
    <source>
        <strain>ULPAs1</strain>
    </source>
</reference>